<keyword id="KW-1003">Cell membrane</keyword>
<keyword id="KW-0472">Membrane</keyword>
<keyword id="KW-0520">NAD</keyword>
<keyword id="KW-0874">Quinone</keyword>
<keyword id="KW-1185">Reference proteome</keyword>
<keyword id="KW-1278">Translocase</keyword>
<keyword id="KW-0812">Transmembrane</keyword>
<keyword id="KW-1133">Transmembrane helix</keyword>
<keyword id="KW-0813">Transport</keyword>
<accession>P9WIW8</accession>
<accession>L0TER2</accession>
<accession>O53308</accession>
<accession>P0A5M0</accession>
<reference key="1">
    <citation type="journal article" date="2002" name="J. Bacteriol.">
        <title>Whole-genome comparison of Mycobacterium tuberculosis clinical and laboratory strains.</title>
        <authorList>
            <person name="Fleischmann R.D."/>
            <person name="Alland D."/>
            <person name="Eisen J.A."/>
            <person name="Carpenter L."/>
            <person name="White O."/>
            <person name="Peterson J.D."/>
            <person name="DeBoy R.T."/>
            <person name="Dodson R.J."/>
            <person name="Gwinn M.L."/>
            <person name="Haft D.H."/>
            <person name="Hickey E.K."/>
            <person name="Kolonay J.F."/>
            <person name="Nelson W.C."/>
            <person name="Umayam L.A."/>
            <person name="Ermolaeva M.D."/>
            <person name="Salzberg S.L."/>
            <person name="Delcher A."/>
            <person name="Utterback T.R."/>
            <person name="Weidman J.F."/>
            <person name="Khouri H.M."/>
            <person name="Gill J."/>
            <person name="Mikula A."/>
            <person name="Bishai W."/>
            <person name="Jacobs W.R. Jr."/>
            <person name="Venter J.C."/>
            <person name="Fraser C.M."/>
        </authorList>
    </citation>
    <scope>NUCLEOTIDE SEQUENCE [LARGE SCALE GENOMIC DNA]</scope>
    <source>
        <strain>CDC 1551 / Oshkosh</strain>
    </source>
</reference>
<evidence type="ECO:0000255" key="1">
    <source>
        <dbReference type="HAMAP-Rule" id="MF_00445"/>
    </source>
</evidence>
<protein>
    <recommendedName>
        <fullName evidence="1">NADH-quinone oxidoreductase subunit N</fullName>
        <ecNumber evidence="1">7.1.1.-</ecNumber>
    </recommendedName>
    <alternativeName>
        <fullName evidence="1">NADH dehydrogenase I subunit N</fullName>
    </alternativeName>
    <alternativeName>
        <fullName evidence="1">NDH-1 subunit N</fullName>
    </alternativeName>
</protein>
<dbReference type="EC" id="7.1.1.-" evidence="1"/>
<dbReference type="EMBL" id="AE000516">
    <property type="protein sequence ID" value="AAK47585.1"/>
    <property type="molecule type" value="Genomic_DNA"/>
</dbReference>
<dbReference type="PIR" id="D70946">
    <property type="entry name" value="D70946"/>
</dbReference>
<dbReference type="RefSeq" id="WP_010924618.1">
    <property type="nucleotide sequence ID" value="NC_002755.2"/>
</dbReference>
<dbReference type="SMR" id="P9WIW8"/>
<dbReference type="KEGG" id="mtc:MT3246"/>
<dbReference type="HOGENOM" id="CLU_007100_1_1_11"/>
<dbReference type="Proteomes" id="UP000001020">
    <property type="component" value="Chromosome"/>
</dbReference>
<dbReference type="GO" id="GO:0005886">
    <property type="term" value="C:plasma membrane"/>
    <property type="evidence" value="ECO:0007669"/>
    <property type="project" value="UniProtKB-SubCell"/>
</dbReference>
<dbReference type="GO" id="GO:0008137">
    <property type="term" value="F:NADH dehydrogenase (ubiquinone) activity"/>
    <property type="evidence" value="ECO:0007669"/>
    <property type="project" value="InterPro"/>
</dbReference>
<dbReference type="GO" id="GO:0050136">
    <property type="term" value="F:NADH:ubiquinone reductase (non-electrogenic) activity"/>
    <property type="evidence" value="ECO:0007669"/>
    <property type="project" value="UniProtKB-UniRule"/>
</dbReference>
<dbReference type="GO" id="GO:0048038">
    <property type="term" value="F:quinone binding"/>
    <property type="evidence" value="ECO:0007669"/>
    <property type="project" value="UniProtKB-KW"/>
</dbReference>
<dbReference type="GO" id="GO:0042773">
    <property type="term" value="P:ATP synthesis coupled electron transport"/>
    <property type="evidence" value="ECO:0007669"/>
    <property type="project" value="InterPro"/>
</dbReference>
<dbReference type="HAMAP" id="MF_00445">
    <property type="entry name" value="NDH1_NuoN_1"/>
    <property type="match status" value="1"/>
</dbReference>
<dbReference type="InterPro" id="IPR010096">
    <property type="entry name" value="NADH-Q_OxRdtase_suN/2"/>
</dbReference>
<dbReference type="InterPro" id="IPR001750">
    <property type="entry name" value="ND/Mrp_TM"/>
</dbReference>
<dbReference type="NCBIfam" id="TIGR01770">
    <property type="entry name" value="NDH_I_N"/>
    <property type="match status" value="1"/>
</dbReference>
<dbReference type="NCBIfam" id="NF004441">
    <property type="entry name" value="PRK05777.1-4"/>
    <property type="match status" value="1"/>
</dbReference>
<dbReference type="PANTHER" id="PTHR22773">
    <property type="entry name" value="NADH DEHYDROGENASE"/>
    <property type="match status" value="1"/>
</dbReference>
<dbReference type="Pfam" id="PF00361">
    <property type="entry name" value="Proton_antipo_M"/>
    <property type="match status" value="1"/>
</dbReference>
<comment type="function">
    <text evidence="1">NDH-1 shuttles electrons from NADH, via FMN and iron-sulfur (Fe-S) centers, to quinones in the respiratory chain. The immediate electron acceptor for the enzyme in this species is believed to be a menaquinone. Couples the redox reaction to proton translocation (for every two electrons transferred, four hydrogen ions are translocated across the cytoplasmic membrane), and thus conserves the redox energy in a proton gradient.</text>
</comment>
<comment type="catalytic activity">
    <reaction evidence="1">
        <text>a quinone + NADH + 5 H(+)(in) = a quinol + NAD(+) + 4 H(+)(out)</text>
        <dbReference type="Rhea" id="RHEA:57888"/>
        <dbReference type="ChEBI" id="CHEBI:15378"/>
        <dbReference type="ChEBI" id="CHEBI:24646"/>
        <dbReference type="ChEBI" id="CHEBI:57540"/>
        <dbReference type="ChEBI" id="CHEBI:57945"/>
        <dbReference type="ChEBI" id="CHEBI:132124"/>
    </reaction>
</comment>
<comment type="subunit">
    <text evidence="1">NDH-1 is composed of 14 different subunits. Subunits NuoA, H, J, K, L, M, N constitute the membrane sector of the complex.</text>
</comment>
<comment type="subcellular location">
    <subcellularLocation>
        <location evidence="1">Cell membrane</location>
        <topology evidence="1">Multi-pass membrane protein</topology>
    </subcellularLocation>
</comment>
<comment type="similarity">
    <text evidence="1">Belongs to the complex I subunit 2 family.</text>
</comment>
<organism>
    <name type="scientific">Mycobacterium tuberculosis (strain CDC 1551 / Oshkosh)</name>
    <dbReference type="NCBI Taxonomy" id="83331"/>
    <lineage>
        <taxon>Bacteria</taxon>
        <taxon>Bacillati</taxon>
        <taxon>Actinomycetota</taxon>
        <taxon>Actinomycetes</taxon>
        <taxon>Mycobacteriales</taxon>
        <taxon>Mycobacteriaceae</taxon>
        <taxon>Mycobacterium</taxon>
        <taxon>Mycobacterium tuberculosis complex</taxon>
    </lineage>
</organism>
<name>NUON_MYCTO</name>
<feature type="chain" id="PRO_0000427932" description="NADH-quinone oxidoreductase subunit N">
    <location>
        <begin position="1"/>
        <end position="531"/>
    </location>
</feature>
<feature type="transmembrane region" description="Helical" evidence="1">
    <location>
        <begin position="8"/>
        <end position="28"/>
    </location>
</feature>
<feature type="transmembrane region" description="Helical" evidence="1">
    <location>
        <begin position="41"/>
        <end position="61"/>
    </location>
</feature>
<feature type="transmembrane region" description="Helical" evidence="1">
    <location>
        <begin position="81"/>
        <end position="101"/>
    </location>
</feature>
<feature type="transmembrane region" description="Helical" evidence="1">
    <location>
        <begin position="146"/>
        <end position="166"/>
    </location>
</feature>
<feature type="transmembrane region" description="Helical" evidence="1">
    <location>
        <begin position="172"/>
        <end position="192"/>
    </location>
</feature>
<feature type="transmembrane region" description="Helical" evidence="1">
    <location>
        <begin position="208"/>
        <end position="228"/>
    </location>
</feature>
<feature type="transmembrane region" description="Helical" evidence="1">
    <location>
        <begin position="250"/>
        <end position="270"/>
    </location>
</feature>
<feature type="transmembrane region" description="Helical" evidence="1">
    <location>
        <begin position="282"/>
        <end position="302"/>
    </location>
</feature>
<feature type="transmembrane region" description="Helical" evidence="1">
    <location>
        <begin position="318"/>
        <end position="338"/>
    </location>
</feature>
<feature type="transmembrane region" description="Helical" evidence="1">
    <location>
        <begin position="350"/>
        <end position="370"/>
    </location>
</feature>
<feature type="transmembrane region" description="Helical" evidence="1">
    <location>
        <begin position="372"/>
        <end position="392"/>
    </location>
</feature>
<feature type="transmembrane region" description="Helical" evidence="1">
    <location>
        <begin position="418"/>
        <end position="438"/>
    </location>
</feature>
<feature type="transmembrane region" description="Helical" evidence="1">
    <location>
        <begin position="453"/>
        <end position="473"/>
    </location>
</feature>
<feature type="transmembrane region" description="Helical" evidence="1">
    <location>
        <begin position="500"/>
        <end position="520"/>
    </location>
</feature>
<gene>
    <name evidence="1" type="primary">nuoN</name>
    <name type="ordered locus">MT3246</name>
</gene>
<proteinExistence type="inferred from homology"/>
<sequence length="531" mass="55384">MILPAPHVEYFLLAPMLIVFSVAVAGVLAEAFLPRRWRYGAQVTLALGGSAVALIAVIVVARSIHGSGHAAVLGAIAVDRATLFLQGTVLLVTIMAVVFMAERSARVSPQRQNTLAVARLPGLDSFTPQLSAVPGSDAERQAERAGATQTELFPLAMLSVGGMMVFPASNDLLTMFVALEVLSLPLYLMCGLARNRRLLSQEAAMKYFLLGAFSSAFFLYGVALLYGATGTLTLPGIRDALAARTDDSMALAGVALLAVGLLFKVGAVPFHSWIPDVYQGAPTPITGFMAAATKVAAFGALLRVVYVALPPLHDQWRPVLWAIAILTMTVGTVTAVNQTNVKRMLAYSSVAHVGFILTGVIADNPAGLSATLFYLVAYSFSTMGAFAIVGLVRGADGSAGSEDADLSHWAGLGQRSPIVGVMLSMFLLAFAGIPLTSGFVSKFAVFRAAASAGAVPLVIVGVISSGVAAYFYVRVIVSMFFTEESGDTPHVAAPGVLSKAAIAVCTVVTVVLGIAPQPVLDLADQAAQLLR</sequence>